<reference key="1">
    <citation type="journal article" date="2011" name="MBio">
        <title>Novel metabolic attributes of the genus Cyanothece, comprising a group of unicellular nitrogen-fixing Cyanobacteria.</title>
        <authorList>
            <person name="Bandyopadhyay A."/>
            <person name="Elvitigala T."/>
            <person name="Welsh E."/>
            <person name="Stockel J."/>
            <person name="Liberton M."/>
            <person name="Min H."/>
            <person name="Sherman L.A."/>
            <person name="Pakrasi H.B."/>
        </authorList>
    </citation>
    <scope>NUCLEOTIDE SEQUENCE [LARGE SCALE GENOMIC DNA]</scope>
    <source>
        <strain>PCC 7425 / ATCC 29141</strain>
    </source>
</reference>
<comment type="function">
    <text evidence="1">Catalyzes the ATP-dependent amination of UTP to CTP with either L-glutamine or ammonia as the source of nitrogen. Regulates intracellular CTP levels through interactions with the four ribonucleotide triphosphates.</text>
</comment>
<comment type="catalytic activity">
    <reaction evidence="1">
        <text>UTP + L-glutamine + ATP + H2O = CTP + L-glutamate + ADP + phosphate + 2 H(+)</text>
        <dbReference type="Rhea" id="RHEA:26426"/>
        <dbReference type="ChEBI" id="CHEBI:15377"/>
        <dbReference type="ChEBI" id="CHEBI:15378"/>
        <dbReference type="ChEBI" id="CHEBI:29985"/>
        <dbReference type="ChEBI" id="CHEBI:30616"/>
        <dbReference type="ChEBI" id="CHEBI:37563"/>
        <dbReference type="ChEBI" id="CHEBI:43474"/>
        <dbReference type="ChEBI" id="CHEBI:46398"/>
        <dbReference type="ChEBI" id="CHEBI:58359"/>
        <dbReference type="ChEBI" id="CHEBI:456216"/>
        <dbReference type="EC" id="6.3.4.2"/>
    </reaction>
</comment>
<comment type="catalytic activity">
    <reaction evidence="1">
        <text>L-glutamine + H2O = L-glutamate + NH4(+)</text>
        <dbReference type="Rhea" id="RHEA:15889"/>
        <dbReference type="ChEBI" id="CHEBI:15377"/>
        <dbReference type="ChEBI" id="CHEBI:28938"/>
        <dbReference type="ChEBI" id="CHEBI:29985"/>
        <dbReference type="ChEBI" id="CHEBI:58359"/>
    </reaction>
</comment>
<comment type="catalytic activity">
    <reaction evidence="1">
        <text>UTP + NH4(+) + ATP = CTP + ADP + phosphate + 2 H(+)</text>
        <dbReference type="Rhea" id="RHEA:16597"/>
        <dbReference type="ChEBI" id="CHEBI:15378"/>
        <dbReference type="ChEBI" id="CHEBI:28938"/>
        <dbReference type="ChEBI" id="CHEBI:30616"/>
        <dbReference type="ChEBI" id="CHEBI:37563"/>
        <dbReference type="ChEBI" id="CHEBI:43474"/>
        <dbReference type="ChEBI" id="CHEBI:46398"/>
        <dbReference type="ChEBI" id="CHEBI:456216"/>
    </reaction>
</comment>
<comment type="activity regulation">
    <text evidence="1">Allosterically activated by GTP, when glutamine is the substrate; GTP has no effect on the reaction when ammonia is the substrate. The allosteric effector GTP functions by stabilizing the protein conformation that binds the tetrahedral intermediate(s) formed during glutamine hydrolysis. Inhibited by the product CTP, via allosteric rather than competitive inhibition.</text>
</comment>
<comment type="pathway">
    <text evidence="1">Pyrimidine metabolism; CTP biosynthesis via de novo pathway; CTP from UDP: step 2/2.</text>
</comment>
<comment type="subunit">
    <text evidence="1">Homotetramer.</text>
</comment>
<comment type="miscellaneous">
    <text evidence="1">CTPSs have evolved a hybrid strategy for distinguishing between UTP and CTP. The overlapping regions of the product feedback inhibitory and substrate sites recognize a common feature in both compounds, the triphosphate moiety. To differentiate isosteric substrate and product pyrimidine rings, an additional pocket far from the expected kinase/ligase catalytic site, specifically recognizes the cytosine and ribose portions of the product inhibitor.</text>
</comment>
<comment type="similarity">
    <text evidence="1">Belongs to the CTP synthase family.</text>
</comment>
<gene>
    <name evidence="1" type="primary">pyrG</name>
    <name type="ordered locus">Cyan7425_1387</name>
</gene>
<accession>B8HNM9</accession>
<organism>
    <name type="scientific">Cyanothece sp. (strain PCC 7425 / ATCC 29141)</name>
    <dbReference type="NCBI Taxonomy" id="395961"/>
    <lineage>
        <taxon>Bacteria</taxon>
        <taxon>Bacillati</taxon>
        <taxon>Cyanobacteriota</taxon>
        <taxon>Cyanophyceae</taxon>
        <taxon>Gomontiellales</taxon>
        <taxon>Cyanothecaceae</taxon>
        <taxon>Cyanothece</taxon>
    </lineage>
</organism>
<dbReference type="EC" id="6.3.4.2" evidence="1"/>
<dbReference type="EMBL" id="CP001344">
    <property type="protein sequence ID" value="ACL43760.1"/>
    <property type="molecule type" value="Genomic_DNA"/>
</dbReference>
<dbReference type="SMR" id="B8HNM9"/>
<dbReference type="STRING" id="395961.Cyan7425_1387"/>
<dbReference type="MEROPS" id="C26.964"/>
<dbReference type="KEGG" id="cyn:Cyan7425_1387"/>
<dbReference type="eggNOG" id="COG0504">
    <property type="taxonomic scope" value="Bacteria"/>
</dbReference>
<dbReference type="HOGENOM" id="CLU_011675_5_0_3"/>
<dbReference type="OrthoDB" id="9801107at2"/>
<dbReference type="UniPathway" id="UPA00159">
    <property type="reaction ID" value="UER00277"/>
</dbReference>
<dbReference type="GO" id="GO:0005829">
    <property type="term" value="C:cytosol"/>
    <property type="evidence" value="ECO:0007669"/>
    <property type="project" value="TreeGrafter"/>
</dbReference>
<dbReference type="GO" id="GO:0005524">
    <property type="term" value="F:ATP binding"/>
    <property type="evidence" value="ECO:0007669"/>
    <property type="project" value="UniProtKB-KW"/>
</dbReference>
<dbReference type="GO" id="GO:0003883">
    <property type="term" value="F:CTP synthase activity"/>
    <property type="evidence" value="ECO:0007669"/>
    <property type="project" value="UniProtKB-UniRule"/>
</dbReference>
<dbReference type="GO" id="GO:0004359">
    <property type="term" value="F:glutaminase activity"/>
    <property type="evidence" value="ECO:0007669"/>
    <property type="project" value="RHEA"/>
</dbReference>
<dbReference type="GO" id="GO:0042802">
    <property type="term" value="F:identical protein binding"/>
    <property type="evidence" value="ECO:0007669"/>
    <property type="project" value="TreeGrafter"/>
</dbReference>
<dbReference type="GO" id="GO:0046872">
    <property type="term" value="F:metal ion binding"/>
    <property type="evidence" value="ECO:0007669"/>
    <property type="project" value="UniProtKB-KW"/>
</dbReference>
<dbReference type="GO" id="GO:0044210">
    <property type="term" value="P:'de novo' CTP biosynthetic process"/>
    <property type="evidence" value="ECO:0007669"/>
    <property type="project" value="UniProtKB-UniRule"/>
</dbReference>
<dbReference type="GO" id="GO:0019856">
    <property type="term" value="P:pyrimidine nucleobase biosynthetic process"/>
    <property type="evidence" value="ECO:0007669"/>
    <property type="project" value="TreeGrafter"/>
</dbReference>
<dbReference type="CDD" id="cd03113">
    <property type="entry name" value="CTPS_N"/>
    <property type="match status" value="1"/>
</dbReference>
<dbReference type="CDD" id="cd01746">
    <property type="entry name" value="GATase1_CTP_Synthase"/>
    <property type="match status" value="1"/>
</dbReference>
<dbReference type="FunFam" id="3.40.50.300:FF:000009">
    <property type="entry name" value="CTP synthase"/>
    <property type="match status" value="1"/>
</dbReference>
<dbReference type="FunFam" id="3.40.50.880:FF:000002">
    <property type="entry name" value="CTP synthase"/>
    <property type="match status" value="1"/>
</dbReference>
<dbReference type="Gene3D" id="3.40.50.880">
    <property type="match status" value="1"/>
</dbReference>
<dbReference type="Gene3D" id="3.40.50.300">
    <property type="entry name" value="P-loop containing nucleotide triphosphate hydrolases"/>
    <property type="match status" value="1"/>
</dbReference>
<dbReference type="HAMAP" id="MF_01227">
    <property type="entry name" value="PyrG"/>
    <property type="match status" value="1"/>
</dbReference>
<dbReference type="InterPro" id="IPR029062">
    <property type="entry name" value="Class_I_gatase-like"/>
</dbReference>
<dbReference type="InterPro" id="IPR004468">
    <property type="entry name" value="CTP_synthase"/>
</dbReference>
<dbReference type="InterPro" id="IPR017456">
    <property type="entry name" value="CTP_synthase_N"/>
</dbReference>
<dbReference type="InterPro" id="IPR017926">
    <property type="entry name" value="GATASE"/>
</dbReference>
<dbReference type="InterPro" id="IPR033828">
    <property type="entry name" value="GATase1_CTP_Synthase"/>
</dbReference>
<dbReference type="InterPro" id="IPR027417">
    <property type="entry name" value="P-loop_NTPase"/>
</dbReference>
<dbReference type="NCBIfam" id="NF003792">
    <property type="entry name" value="PRK05380.1"/>
    <property type="match status" value="1"/>
</dbReference>
<dbReference type="NCBIfam" id="TIGR00337">
    <property type="entry name" value="PyrG"/>
    <property type="match status" value="1"/>
</dbReference>
<dbReference type="PANTHER" id="PTHR11550">
    <property type="entry name" value="CTP SYNTHASE"/>
    <property type="match status" value="1"/>
</dbReference>
<dbReference type="PANTHER" id="PTHR11550:SF0">
    <property type="entry name" value="CTP SYNTHASE-RELATED"/>
    <property type="match status" value="1"/>
</dbReference>
<dbReference type="Pfam" id="PF06418">
    <property type="entry name" value="CTP_synth_N"/>
    <property type="match status" value="1"/>
</dbReference>
<dbReference type="Pfam" id="PF00117">
    <property type="entry name" value="GATase"/>
    <property type="match status" value="1"/>
</dbReference>
<dbReference type="SUPFAM" id="SSF52317">
    <property type="entry name" value="Class I glutamine amidotransferase-like"/>
    <property type="match status" value="1"/>
</dbReference>
<dbReference type="SUPFAM" id="SSF52540">
    <property type="entry name" value="P-loop containing nucleoside triphosphate hydrolases"/>
    <property type="match status" value="1"/>
</dbReference>
<dbReference type="PROSITE" id="PS51273">
    <property type="entry name" value="GATASE_TYPE_1"/>
    <property type="match status" value="1"/>
</dbReference>
<sequence length="549" mass="61165">MTKFVFVTGGVVSSIGKGIVAASLGRLLKSRNYSVSILKLDPYINVDPGTMSPFQHGEVFVTDDGAETDLDLGHYERFTDTAMSRLNSVTTGSIYQAVLNKERRGDYMGGTVQVIPHITNEIKDRILRVAKDTNPDVVIIEIGGTVGDIESLPFLEAIRQFRTEVGRQNVLYMHVTLIPWIPSAGEMKTKPTQHSVKELRSIGIQPDILVCRCDRPLYPGIKDKMSQFCDVPVKSVITCQDARSIYEVPLILEREGLAAQVLSLLNLEQRTPDLSEWQSLVEQLYRPKPPVEIAIVGKYVRLTDAYLSVMEALRHAAIAVGCELNLRWINSEDLENNNPEAYLGGVTGVVVPGGFGIRGVDGKIAAIRYAREHQIPFLGLCLGMQCCVIEWARSIAKLTDANSAEFDPQTSNPVINLLPEQQDVEVLGGTMRLGLYPCRLLSNSLAYQLYQETVIYERHRHRYEFNNAYRNLFLDTGFVVSGSSPDGRLVEIIELPEHPFFIATQFHPEFRSRPNVPHPLFKGFVQAARTHSSDRSNGHTPSETPSLSV</sequence>
<keyword id="KW-0067">ATP-binding</keyword>
<keyword id="KW-0315">Glutamine amidotransferase</keyword>
<keyword id="KW-0436">Ligase</keyword>
<keyword id="KW-0460">Magnesium</keyword>
<keyword id="KW-0479">Metal-binding</keyword>
<keyword id="KW-0547">Nucleotide-binding</keyword>
<keyword id="KW-0665">Pyrimidine biosynthesis</keyword>
<protein>
    <recommendedName>
        <fullName evidence="1">CTP synthase</fullName>
        <ecNumber evidence="1">6.3.4.2</ecNumber>
    </recommendedName>
    <alternativeName>
        <fullName evidence="1">Cytidine 5'-triphosphate synthase</fullName>
    </alternativeName>
    <alternativeName>
        <fullName evidence="1">Cytidine triphosphate synthetase</fullName>
        <shortName evidence="1">CTP synthetase</shortName>
        <shortName evidence="1">CTPS</shortName>
    </alternativeName>
    <alternativeName>
        <fullName evidence="1">UTP--ammonia ligase</fullName>
    </alternativeName>
</protein>
<evidence type="ECO:0000255" key="1">
    <source>
        <dbReference type="HAMAP-Rule" id="MF_01227"/>
    </source>
</evidence>
<proteinExistence type="inferred from homology"/>
<feature type="chain" id="PRO_1000164939" description="CTP synthase">
    <location>
        <begin position="1"/>
        <end position="549"/>
    </location>
</feature>
<feature type="domain" description="Glutamine amidotransferase type-1" evidence="1">
    <location>
        <begin position="292"/>
        <end position="534"/>
    </location>
</feature>
<feature type="region of interest" description="Amidoligase domain" evidence="1">
    <location>
        <begin position="1"/>
        <end position="267"/>
    </location>
</feature>
<feature type="active site" description="Nucleophile; for glutamine hydrolysis" evidence="1">
    <location>
        <position position="381"/>
    </location>
</feature>
<feature type="active site" evidence="1">
    <location>
        <position position="507"/>
    </location>
</feature>
<feature type="active site" evidence="1">
    <location>
        <position position="509"/>
    </location>
</feature>
<feature type="binding site" evidence="1">
    <location>
        <position position="13"/>
    </location>
    <ligand>
        <name>CTP</name>
        <dbReference type="ChEBI" id="CHEBI:37563"/>
        <note>allosteric inhibitor</note>
    </ligand>
</feature>
<feature type="binding site" evidence="1">
    <location>
        <position position="13"/>
    </location>
    <ligand>
        <name>UTP</name>
        <dbReference type="ChEBI" id="CHEBI:46398"/>
    </ligand>
</feature>
<feature type="binding site" evidence="1">
    <location>
        <begin position="14"/>
        <end position="19"/>
    </location>
    <ligand>
        <name>ATP</name>
        <dbReference type="ChEBI" id="CHEBI:30616"/>
    </ligand>
</feature>
<feature type="binding site" evidence="1">
    <location>
        <position position="71"/>
    </location>
    <ligand>
        <name>ATP</name>
        <dbReference type="ChEBI" id="CHEBI:30616"/>
    </ligand>
</feature>
<feature type="binding site" evidence="1">
    <location>
        <position position="71"/>
    </location>
    <ligand>
        <name>Mg(2+)</name>
        <dbReference type="ChEBI" id="CHEBI:18420"/>
    </ligand>
</feature>
<feature type="binding site" evidence="1">
    <location>
        <position position="141"/>
    </location>
    <ligand>
        <name>Mg(2+)</name>
        <dbReference type="ChEBI" id="CHEBI:18420"/>
    </ligand>
</feature>
<feature type="binding site" evidence="1">
    <location>
        <begin position="148"/>
        <end position="150"/>
    </location>
    <ligand>
        <name>CTP</name>
        <dbReference type="ChEBI" id="CHEBI:37563"/>
        <note>allosteric inhibitor</note>
    </ligand>
</feature>
<feature type="binding site" evidence="1">
    <location>
        <begin position="188"/>
        <end position="193"/>
    </location>
    <ligand>
        <name>CTP</name>
        <dbReference type="ChEBI" id="CHEBI:37563"/>
        <note>allosteric inhibitor</note>
    </ligand>
</feature>
<feature type="binding site" evidence="1">
    <location>
        <begin position="188"/>
        <end position="193"/>
    </location>
    <ligand>
        <name>UTP</name>
        <dbReference type="ChEBI" id="CHEBI:46398"/>
    </ligand>
</feature>
<feature type="binding site" evidence="1">
    <location>
        <position position="224"/>
    </location>
    <ligand>
        <name>CTP</name>
        <dbReference type="ChEBI" id="CHEBI:37563"/>
        <note>allosteric inhibitor</note>
    </ligand>
</feature>
<feature type="binding site" evidence="1">
    <location>
        <position position="224"/>
    </location>
    <ligand>
        <name>UTP</name>
        <dbReference type="ChEBI" id="CHEBI:46398"/>
    </ligand>
</feature>
<feature type="binding site" evidence="1">
    <location>
        <position position="354"/>
    </location>
    <ligand>
        <name>L-glutamine</name>
        <dbReference type="ChEBI" id="CHEBI:58359"/>
    </ligand>
</feature>
<feature type="binding site" evidence="1">
    <location>
        <begin position="382"/>
        <end position="385"/>
    </location>
    <ligand>
        <name>L-glutamine</name>
        <dbReference type="ChEBI" id="CHEBI:58359"/>
    </ligand>
</feature>
<feature type="binding site" evidence="1">
    <location>
        <position position="405"/>
    </location>
    <ligand>
        <name>L-glutamine</name>
        <dbReference type="ChEBI" id="CHEBI:58359"/>
    </ligand>
</feature>
<feature type="binding site" evidence="1">
    <location>
        <position position="462"/>
    </location>
    <ligand>
        <name>L-glutamine</name>
        <dbReference type="ChEBI" id="CHEBI:58359"/>
    </ligand>
</feature>
<name>PYRG_CYAP4</name>